<accession>B2K2Q8</accession>
<evidence type="ECO:0000255" key="1">
    <source>
        <dbReference type="HAMAP-Rule" id="MF_01343"/>
    </source>
</evidence>
<evidence type="ECO:0000305" key="2"/>
<comment type="function">
    <text evidence="1">One of the primary rRNA binding proteins, it binds directly to 16S rRNA where it helps nucleate assembly of the platform of the 30S subunit by binding and bridging several RNA helices of the 16S rRNA.</text>
</comment>
<comment type="function">
    <text evidence="1">Forms an intersubunit bridge (bridge B4) with the 23S rRNA of the 50S subunit in the ribosome.</text>
</comment>
<comment type="subunit">
    <text evidence="1">Part of the 30S ribosomal subunit. Forms a bridge to the 50S subunit in the 70S ribosome, contacting the 23S rRNA.</text>
</comment>
<comment type="similarity">
    <text evidence="1">Belongs to the universal ribosomal protein uS15 family.</text>
</comment>
<sequence>MSLSVEAKAKIVADFGRGTNDTGSSEVQVALLTAQINHLQGHFSEHKKDHHSRRGLLRMVSTRRKLLDYLKRQDVARYASLIERLGLRR</sequence>
<proteinExistence type="inferred from homology"/>
<name>RS15_YERPB</name>
<gene>
    <name evidence="1" type="primary">rpsO</name>
    <name type="ordered locus">YPTS_0513</name>
</gene>
<protein>
    <recommendedName>
        <fullName evidence="1">Small ribosomal subunit protein uS15</fullName>
    </recommendedName>
    <alternativeName>
        <fullName evidence="2">30S ribosomal protein S15</fullName>
    </alternativeName>
</protein>
<organism>
    <name type="scientific">Yersinia pseudotuberculosis serotype IB (strain PB1/+)</name>
    <dbReference type="NCBI Taxonomy" id="502801"/>
    <lineage>
        <taxon>Bacteria</taxon>
        <taxon>Pseudomonadati</taxon>
        <taxon>Pseudomonadota</taxon>
        <taxon>Gammaproteobacteria</taxon>
        <taxon>Enterobacterales</taxon>
        <taxon>Yersiniaceae</taxon>
        <taxon>Yersinia</taxon>
    </lineage>
</organism>
<keyword id="KW-0687">Ribonucleoprotein</keyword>
<keyword id="KW-0689">Ribosomal protein</keyword>
<keyword id="KW-0694">RNA-binding</keyword>
<keyword id="KW-0699">rRNA-binding</keyword>
<reference key="1">
    <citation type="submission" date="2008-04" db="EMBL/GenBank/DDBJ databases">
        <title>Complete sequence of Yersinia pseudotuberculosis PB1/+.</title>
        <authorList>
            <person name="Copeland A."/>
            <person name="Lucas S."/>
            <person name="Lapidus A."/>
            <person name="Glavina del Rio T."/>
            <person name="Dalin E."/>
            <person name="Tice H."/>
            <person name="Bruce D."/>
            <person name="Goodwin L."/>
            <person name="Pitluck S."/>
            <person name="Munk A.C."/>
            <person name="Brettin T."/>
            <person name="Detter J.C."/>
            <person name="Han C."/>
            <person name="Tapia R."/>
            <person name="Schmutz J."/>
            <person name="Larimer F."/>
            <person name="Land M."/>
            <person name="Hauser L."/>
            <person name="Challacombe J.F."/>
            <person name="Green L."/>
            <person name="Lindler L.E."/>
            <person name="Nikolich M.P."/>
            <person name="Richardson P."/>
        </authorList>
    </citation>
    <scope>NUCLEOTIDE SEQUENCE [LARGE SCALE GENOMIC DNA]</scope>
    <source>
        <strain>PB1/+</strain>
    </source>
</reference>
<feature type="chain" id="PRO_1000143197" description="Small ribosomal subunit protein uS15">
    <location>
        <begin position="1"/>
        <end position="89"/>
    </location>
</feature>
<dbReference type="EMBL" id="CP001048">
    <property type="protein sequence ID" value="ACC87499.1"/>
    <property type="molecule type" value="Genomic_DNA"/>
</dbReference>
<dbReference type="RefSeq" id="WP_002209257.1">
    <property type="nucleotide sequence ID" value="NZ_CP009780.1"/>
</dbReference>
<dbReference type="SMR" id="B2K2Q8"/>
<dbReference type="GeneID" id="96663990"/>
<dbReference type="KEGG" id="ypb:YPTS_0513"/>
<dbReference type="PATRIC" id="fig|502801.10.peg.4187"/>
<dbReference type="GO" id="GO:0022627">
    <property type="term" value="C:cytosolic small ribosomal subunit"/>
    <property type="evidence" value="ECO:0007669"/>
    <property type="project" value="TreeGrafter"/>
</dbReference>
<dbReference type="GO" id="GO:0019843">
    <property type="term" value="F:rRNA binding"/>
    <property type="evidence" value="ECO:0007669"/>
    <property type="project" value="UniProtKB-UniRule"/>
</dbReference>
<dbReference type="GO" id="GO:0003735">
    <property type="term" value="F:structural constituent of ribosome"/>
    <property type="evidence" value="ECO:0007669"/>
    <property type="project" value="InterPro"/>
</dbReference>
<dbReference type="GO" id="GO:0006412">
    <property type="term" value="P:translation"/>
    <property type="evidence" value="ECO:0007669"/>
    <property type="project" value="UniProtKB-UniRule"/>
</dbReference>
<dbReference type="CDD" id="cd00353">
    <property type="entry name" value="Ribosomal_S15p_S13e"/>
    <property type="match status" value="1"/>
</dbReference>
<dbReference type="FunFam" id="1.10.287.10:FF:000002">
    <property type="entry name" value="30S ribosomal protein S15"/>
    <property type="match status" value="1"/>
</dbReference>
<dbReference type="Gene3D" id="6.10.250.3130">
    <property type="match status" value="1"/>
</dbReference>
<dbReference type="Gene3D" id="1.10.287.10">
    <property type="entry name" value="S15/NS1, RNA-binding"/>
    <property type="match status" value="1"/>
</dbReference>
<dbReference type="HAMAP" id="MF_01343_B">
    <property type="entry name" value="Ribosomal_uS15_B"/>
    <property type="match status" value="1"/>
</dbReference>
<dbReference type="InterPro" id="IPR000589">
    <property type="entry name" value="Ribosomal_uS15"/>
</dbReference>
<dbReference type="InterPro" id="IPR005290">
    <property type="entry name" value="Ribosomal_uS15_bac-type"/>
</dbReference>
<dbReference type="InterPro" id="IPR009068">
    <property type="entry name" value="uS15_NS1_RNA-bd_sf"/>
</dbReference>
<dbReference type="NCBIfam" id="TIGR00952">
    <property type="entry name" value="S15_bact"/>
    <property type="match status" value="1"/>
</dbReference>
<dbReference type="PANTHER" id="PTHR23321">
    <property type="entry name" value="RIBOSOMAL PROTEIN S15, BACTERIAL AND ORGANELLAR"/>
    <property type="match status" value="1"/>
</dbReference>
<dbReference type="PANTHER" id="PTHR23321:SF26">
    <property type="entry name" value="SMALL RIBOSOMAL SUBUNIT PROTEIN US15M"/>
    <property type="match status" value="1"/>
</dbReference>
<dbReference type="Pfam" id="PF00312">
    <property type="entry name" value="Ribosomal_S15"/>
    <property type="match status" value="1"/>
</dbReference>
<dbReference type="SMART" id="SM01387">
    <property type="entry name" value="Ribosomal_S15"/>
    <property type="match status" value="1"/>
</dbReference>
<dbReference type="SUPFAM" id="SSF47060">
    <property type="entry name" value="S15/NS1 RNA-binding domain"/>
    <property type="match status" value="1"/>
</dbReference>
<dbReference type="PROSITE" id="PS00362">
    <property type="entry name" value="RIBOSOMAL_S15"/>
    <property type="match status" value="1"/>
</dbReference>